<gene>
    <name type="primary">srp68</name>
    <name type="ORF">DDB_G0285821</name>
</gene>
<organism>
    <name type="scientific">Dictyostelium discoideum</name>
    <name type="common">Social amoeba</name>
    <dbReference type="NCBI Taxonomy" id="44689"/>
    <lineage>
        <taxon>Eukaryota</taxon>
        <taxon>Amoebozoa</taxon>
        <taxon>Evosea</taxon>
        <taxon>Eumycetozoa</taxon>
        <taxon>Dictyostelia</taxon>
        <taxon>Dictyosteliales</taxon>
        <taxon>Dictyosteliaceae</taxon>
        <taxon>Dictyostelium</taxon>
    </lineage>
</organism>
<accession>Q1ZXE8</accession>
<reference key="1">
    <citation type="journal article" date="2005" name="Nature">
        <title>The genome of the social amoeba Dictyostelium discoideum.</title>
        <authorList>
            <person name="Eichinger L."/>
            <person name="Pachebat J.A."/>
            <person name="Gloeckner G."/>
            <person name="Rajandream M.A."/>
            <person name="Sucgang R."/>
            <person name="Berriman M."/>
            <person name="Song J."/>
            <person name="Olsen R."/>
            <person name="Szafranski K."/>
            <person name="Xu Q."/>
            <person name="Tunggal B."/>
            <person name="Kummerfeld S."/>
            <person name="Madera M."/>
            <person name="Konfortov B.A."/>
            <person name="Rivero F."/>
            <person name="Bankier A.T."/>
            <person name="Lehmann R."/>
            <person name="Hamlin N."/>
            <person name="Davies R."/>
            <person name="Gaudet P."/>
            <person name="Fey P."/>
            <person name="Pilcher K."/>
            <person name="Chen G."/>
            <person name="Saunders D."/>
            <person name="Sodergren E.J."/>
            <person name="Davis P."/>
            <person name="Kerhornou A."/>
            <person name="Nie X."/>
            <person name="Hall N."/>
            <person name="Anjard C."/>
            <person name="Hemphill L."/>
            <person name="Bason N."/>
            <person name="Farbrother P."/>
            <person name="Desany B."/>
            <person name="Just E."/>
            <person name="Morio T."/>
            <person name="Rost R."/>
            <person name="Churcher C.M."/>
            <person name="Cooper J."/>
            <person name="Haydock S."/>
            <person name="van Driessche N."/>
            <person name="Cronin A."/>
            <person name="Goodhead I."/>
            <person name="Muzny D.M."/>
            <person name="Mourier T."/>
            <person name="Pain A."/>
            <person name="Lu M."/>
            <person name="Harper D."/>
            <person name="Lindsay R."/>
            <person name="Hauser H."/>
            <person name="James K.D."/>
            <person name="Quiles M."/>
            <person name="Madan Babu M."/>
            <person name="Saito T."/>
            <person name="Buchrieser C."/>
            <person name="Wardroper A."/>
            <person name="Felder M."/>
            <person name="Thangavelu M."/>
            <person name="Johnson D."/>
            <person name="Knights A."/>
            <person name="Loulseged H."/>
            <person name="Mungall K.L."/>
            <person name="Oliver K."/>
            <person name="Price C."/>
            <person name="Quail M.A."/>
            <person name="Urushihara H."/>
            <person name="Hernandez J."/>
            <person name="Rabbinowitsch E."/>
            <person name="Steffen D."/>
            <person name="Sanders M."/>
            <person name="Ma J."/>
            <person name="Kohara Y."/>
            <person name="Sharp S."/>
            <person name="Simmonds M.N."/>
            <person name="Spiegler S."/>
            <person name="Tivey A."/>
            <person name="Sugano S."/>
            <person name="White B."/>
            <person name="Walker D."/>
            <person name="Woodward J.R."/>
            <person name="Winckler T."/>
            <person name="Tanaka Y."/>
            <person name="Shaulsky G."/>
            <person name="Schleicher M."/>
            <person name="Weinstock G.M."/>
            <person name="Rosenthal A."/>
            <person name="Cox E.C."/>
            <person name="Chisholm R.L."/>
            <person name="Gibbs R.A."/>
            <person name="Loomis W.F."/>
            <person name="Platzer M."/>
            <person name="Kay R.R."/>
            <person name="Williams J.G."/>
            <person name="Dear P.H."/>
            <person name="Noegel A.A."/>
            <person name="Barrell B.G."/>
            <person name="Kuspa A."/>
        </authorList>
    </citation>
    <scope>NUCLEOTIDE SEQUENCE [LARGE SCALE GENOMIC DNA]</scope>
    <source>
        <strain>AX4</strain>
    </source>
</reference>
<proteinExistence type="inferred from homology"/>
<feature type="chain" id="PRO_0000327627" description="Signal recognition particle subunit SRP68">
    <location>
        <begin position="1"/>
        <end position="614"/>
    </location>
</feature>
<protein>
    <recommendedName>
        <fullName>Signal recognition particle subunit SRP68</fullName>
    </recommendedName>
    <alternativeName>
        <fullName>Signal recognition particle 68 kDa protein homolog</fullName>
    </alternativeName>
</protein>
<comment type="function">
    <text evidence="1 3">Component of the signal recognition particle (SRP) complex, a ribonucleoprotein complex that mediates the cotranslational targeting of secretory and membrane proteins to the endoplasmic reticulum (ER) (By similarity). The SRP complex interacts with the signal sequence in nascent secretory and membrane proteins and directs them to the membrane of the ER (By similarity). The SRP complex targets the ribosome-nascent chain complex to the SRP receptor (SR), which is anchored in the ER, where SR compaction and GTPase rearrangement drive cotranslational protein translocation into the ER (By similarity). Binds the 7SL RNA, srp72 binds to this complex subsequently (By similarity). The SRP complex possibly participates in the elongation arrest function (By similarity).</text>
</comment>
<comment type="subunit">
    <text evidence="2 3">Heterodimer with srp72 (By similarity). Srp68-srp72 heterodimer formation is stabilized by the presence of 7SL RNA (By similarity). Component of a signal recognition particle (SRP) complex that consists of a 7SL RNA molecule and six protein subunits: srp72, srp68, srp54, srp19, srp14 and srp9 (By similarity). Within the SRP complex, interacts (via C-terminus) with srp72 (via N-terminus) (By similarity).</text>
</comment>
<comment type="subcellular location">
    <subcellularLocation>
        <location evidence="3">Cytoplasm</location>
    </subcellularLocation>
    <subcellularLocation>
        <location evidence="3">Nucleus</location>
        <location evidence="3">Nucleolus</location>
    </subcellularLocation>
    <subcellularLocation>
        <location evidence="3">Endoplasmic reticulum</location>
    </subcellularLocation>
</comment>
<comment type="domain">
    <text evidence="3">The N-terminus is required for RNA-binding.</text>
</comment>
<comment type="similarity">
    <text evidence="4">Belongs to the SRP68 family.</text>
</comment>
<name>SRP68_DICDI</name>
<dbReference type="EMBL" id="AAFI02000080">
    <property type="protein sequence ID" value="EAS66853.1"/>
    <property type="molecule type" value="Genomic_DNA"/>
</dbReference>
<dbReference type="RefSeq" id="XP_001134536.1">
    <property type="nucleotide sequence ID" value="XM_001134536.1"/>
</dbReference>
<dbReference type="SMR" id="Q1ZXE8"/>
<dbReference type="FunCoup" id="Q1ZXE8">
    <property type="interactions" value="1004"/>
</dbReference>
<dbReference type="STRING" id="44689.Q1ZXE8"/>
<dbReference type="GlyGen" id="Q1ZXE8">
    <property type="glycosylation" value="1 site"/>
</dbReference>
<dbReference type="PaxDb" id="44689-DDB0232383"/>
<dbReference type="EnsemblProtists" id="EAS66853">
    <property type="protein sequence ID" value="EAS66853"/>
    <property type="gene ID" value="DDB_G0285821"/>
</dbReference>
<dbReference type="GeneID" id="8625304"/>
<dbReference type="KEGG" id="ddi:DDB_G0285821"/>
<dbReference type="dictyBase" id="DDB_G0285821">
    <property type="gene designation" value="srp68"/>
</dbReference>
<dbReference type="VEuPathDB" id="AmoebaDB:DDB_G0285821"/>
<dbReference type="eggNOG" id="KOG2460">
    <property type="taxonomic scope" value="Eukaryota"/>
</dbReference>
<dbReference type="HOGENOM" id="CLU_018649_0_1_1"/>
<dbReference type="InParanoid" id="Q1ZXE8"/>
<dbReference type="OMA" id="DERFIHI"/>
<dbReference type="PhylomeDB" id="Q1ZXE8"/>
<dbReference type="Reactome" id="R-DDI-1799339">
    <property type="pathway name" value="SRP-dependent cotranslational protein targeting to membrane"/>
</dbReference>
<dbReference type="PRO" id="PR:Q1ZXE8"/>
<dbReference type="Proteomes" id="UP000002195">
    <property type="component" value="Chromosome 4"/>
</dbReference>
<dbReference type="GO" id="GO:0005783">
    <property type="term" value="C:endoplasmic reticulum"/>
    <property type="evidence" value="ECO:0007669"/>
    <property type="project" value="UniProtKB-SubCell"/>
</dbReference>
<dbReference type="GO" id="GO:0005730">
    <property type="term" value="C:nucleolus"/>
    <property type="evidence" value="ECO:0007669"/>
    <property type="project" value="UniProtKB-SubCell"/>
</dbReference>
<dbReference type="GO" id="GO:0005786">
    <property type="term" value="C:signal recognition particle, endoplasmic reticulum targeting"/>
    <property type="evidence" value="ECO:0000250"/>
    <property type="project" value="dictyBase"/>
</dbReference>
<dbReference type="GO" id="GO:0008312">
    <property type="term" value="F:7S RNA binding"/>
    <property type="evidence" value="ECO:0007669"/>
    <property type="project" value="InterPro"/>
</dbReference>
<dbReference type="GO" id="GO:0030942">
    <property type="term" value="F:endoplasmic reticulum signal peptide binding"/>
    <property type="evidence" value="ECO:0007669"/>
    <property type="project" value="InterPro"/>
</dbReference>
<dbReference type="GO" id="GO:0005047">
    <property type="term" value="F:signal recognition particle binding"/>
    <property type="evidence" value="ECO:0000318"/>
    <property type="project" value="GO_Central"/>
</dbReference>
<dbReference type="GO" id="GO:0006614">
    <property type="term" value="P:SRP-dependent cotranslational protein targeting to membrane"/>
    <property type="evidence" value="ECO:0000318"/>
    <property type="project" value="GO_Central"/>
</dbReference>
<dbReference type="CDD" id="cd15481">
    <property type="entry name" value="SRP68-RBD"/>
    <property type="match status" value="1"/>
</dbReference>
<dbReference type="FunFam" id="1.10.3450.40:FF:000012">
    <property type="match status" value="1"/>
</dbReference>
<dbReference type="Gene3D" id="1.10.3450.40">
    <property type="entry name" value="Signal recognition particle, SRP68 subunit, RNA-binding domain"/>
    <property type="match status" value="1"/>
</dbReference>
<dbReference type="InterPro" id="IPR026258">
    <property type="entry name" value="SRP68"/>
</dbReference>
<dbReference type="InterPro" id="IPR034652">
    <property type="entry name" value="SRP68-RBD"/>
</dbReference>
<dbReference type="InterPro" id="IPR038253">
    <property type="entry name" value="SRP68_N_sf"/>
</dbReference>
<dbReference type="PANTHER" id="PTHR12860">
    <property type="entry name" value="SIGNAL RECOGNITION PARTICLE 68 KDA PROTEIN"/>
    <property type="match status" value="1"/>
</dbReference>
<dbReference type="PANTHER" id="PTHR12860:SF0">
    <property type="entry name" value="SIGNAL RECOGNITION PARTICLE SUBUNIT SRP68"/>
    <property type="match status" value="1"/>
</dbReference>
<dbReference type="Pfam" id="PF16969">
    <property type="entry name" value="SRP68"/>
    <property type="match status" value="1"/>
</dbReference>
<dbReference type="PIRSF" id="PIRSF038995">
    <property type="entry name" value="SRP68"/>
    <property type="match status" value="1"/>
</dbReference>
<keyword id="KW-0963">Cytoplasm</keyword>
<keyword id="KW-0256">Endoplasmic reticulum</keyword>
<keyword id="KW-0539">Nucleus</keyword>
<keyword id="KW-1185">Reference proteome</keyword>
<keyword id="KW-0687">Ribonucleoprotein</keyword>
<keyword id="KW-0694">RNA-binding</keyword>
<keyword id="KW-0733">Signal recognition particle</keyword>
<evidence type="ECO:0000250" key="1">
    <source>
        <dbReference type="UniProtKB" id="P38687"/>
    </source>
</evidence>
<evidence type="ECO:0000250" key="2">
    <source>
        <dbReference type="UniProtKB" id="Q00004"/>
    </source>
</evidence>
<evidence type="ECO:0000250" key="3">
    <source>
        <dbReference type="UniProtKB" id="Q9UHB9"/>
    </source>
</evidence>
<evidence type="ECO:0000305" key="4"/>
<sequence length="614" mass="70904">MATNISTSPKEDVPKEKFHLDILNFSQTSQIQFGLRLQDYKKYRQYCSKRIQRLRSQLRKQYGKKNYVNKIVLNGGETEKQINDVRYLQISLLKTERAWSYAMDLKAQFEKDNDSRIGFHMNRRFGKASRNSTQLYELCKLVADQYTIIEAHAYSSWMASSLSLTKQDFKKALEEINISKTIYEKLSEQGDHSQKELYQKRIEETEPIIRFCLYNLKNEKNTSNKVSQNTLTIIEQSLEELKNQENKKKSSTSSTTTTTATTTIEWKSKSIKVDEKLDEKLKIFNEFKKENENKLPKNINASIDTTSNISPIFNIYDKLVYNLINCETIVKNDLSTLVRVNLKNKSVKSEIEEQSTRILLAYIMYHKMKYLYERNSILITMMQRVLDGEKVDESAIKKKVKKVTWNDLVRLSTHQVKVYTIMSESRDTDSNKEIARDQDAQLILLKSIRLYYIAVCLAKSLKFSETMAVLDRVLTNIQNVRKTNTKNQQILNDTNELESNIKKQRSQIHANSFIQQLSENQDLKNQMSSLSIGGITTASGKSNDLISGLDSFDTSFLTEKKLVQLPPQLQPVQAKPIFFDLAFNSVTFPSLDQRKKGSSTGTPSKGLFGFWGRG</sequence>